<gene>
    <name evidence="1" type="primary">tpiA</name>
    <name type="ordered locus">YPDSF_3818</name>
</gene>
<dbReference type="EC" id="5.3.1.1" evidence="1"/>
<dbReference type="EMBL" id="CP000668">
    <property type="protein sequence ID" value="ABP42163.1"/>
    <property type="molecule type" value="Genomic_DNA"/>
</dbReference>
<dbReference type="RefSeq" id="WP_002208959.1">
    <property type="nucleotide sequence ID" value="NZ_CP009715.1"/>
</dbReference>
<dbReference type="SMR" id="A4TSA1"/>
<dbReference type="GeneID" id="57974507"/>
<dbReference type="KEGG" id="ypp:YPDSF_3818"/>
<dbReference type="PATRIC" id="fig|386656.14.peg.702"/>
<dbReference type="UniPathway" id="UPA00109">
    <property type="reaction ID" value="UER00189"/>
</dbReference>
<dbReference type="UniPathway" id="UPA00138"/>
<dbReference type="GO" id="GO:0005829">
    <property type="term" value="C:cytosol"/>
    <property type="evidence" value="ECO:0007669"/>
    <property type="project" value="TreeGrafter"/>
</dbReference>
<dbReference type="GO" id="GO:0004807">
    <property type="term" value="F:triose-phosphate isomerase activity"/>
    <property type="evidence" value="ECO:0007669"/>
    <property type="project" value="UniProtKB-UniRule"/>
</dbReference>
<dbReference type="GO" id="GO:0006094">
    <property type="term" value="P:gluconeogenesis"/>
    <property type="evidence" value="ECO:0007669"/>
    <property type="project" value="UniProtKB-UniRule"/>
</dbReference>
<dbReference type="GO" id="GO:0046166">
    <property type="term" value="P:glyceraldehyde-3-phosphate biosynthetic process"/>
    <property type="evidence" value="ECO:0007669"/>
    <property type="project" value="TreeGrafter"/>
</dbReference>
<dbReference type="GO" id="GO:0019563">
    <property type="term" value="P:glycerol catabolic process"/>
    <property type="evidence" value="ECO:0007669"/>
    <property type="project" value="TreeGrafter"/>
</dbReference>
<dbReference type="GO" id="GO:0006096">
    <property type="term" value="P:glycolytic process"/>
    <property type="evidence" value="ECO:0007669"/>
    <property type="project" value="UniProtKB-UniRule"/>
</dbReference>
<dbReference type="CDD" id="cd00311">
    <property type="entry name" value="TIM"/>
    <property type="match status" value="1"/>
</dbReference>
<dbReference type="FunFam" id="3.20.20.70:FF:000020">
    <property type="entry name" value="Triosephosphate isomerase"/>
    <property type="match status" value="1"/>
</dbReference>
<dbReference type="Gene3D" id="3.20.20.70">
    <property type="entry name" value="Aldolase class I"/>
    <property type="match status" value="1"/>
</dbReference>
<dbReference type="HAMAP" id="MF_00147_B">
    <property type="entry name" value="TIM_B"/>
    <property type="match status" value="1"/>
</dbReference>
<dbReference type="InterPro" id="IPR013785">
    <property type="entry name" value="Aldolase_TIM"/>
</dbReference>
<dbReference type="InterPro" id="IPR035990">
    <property type="entry name" value="TIM_sf"/>
</dbReference>
<dbReference type="InterPro" id="IPR022896">
    <property type="entry name" value="TrioseP_Isoase_bac/euk"/>
</dbReference>
<dbReference type="InterPro" id="IPR000652">
    <property type="entry name" value="Triosephosphate_isomerase"/>
</dbReference>
<dbReference type="InterPro" id="IPR020861">
    <property type="entry name" value="Triosephosphate_isomerase_AS"/>
</dbReference>
<dbReference type="NCBIfam" id="TIGR00419">
    <property type="entry name" value="tim"/>
    <property type="match status" value="1"/>
</dbReference>
<dbReference type="PANTHER" id="PTHR21139">
    <property type="entry name" value="TRIOSEPHOSPHATE ISOMERASE"/>
    <property type="match status" value="1"/>
</dbReference>
<dbReference type="PANTHER" id="PTHR21139:SF42">
    <property type="entry name" value="TRIOSEPHOSPHATE ISOMERASE"/>
    <property type="match status" value="1"/>
</dbReference>
<dbReference type="Pfam" id="PF00121">
    <property type="entry name" value="TIM"/>
    <property type="match status" value="1"/>
</dbReference>
<dbReference type="SUPFAM" id="SSF51351">
    <property type="entry name" value="Triosephosphate isomerase (TIM)"/>
    <property type="match status" value="1"/>
</dbReference>
<dbReference type="PROSITE" id="PS00171">
    <property type="entry name" value="TIM_1"/>
    <property type="match status" value="1"/>
</dbReference>
<dbReference type="PROSITE" id="PS51440">
    <property type="entry name" value="TIM_2"/>
    <property type="match status" value="1"/>
</dbReference>
<keyword id="KW-0963">Cytoplasm</keyword>
<keyword id="KW-0312">Gluconeogenesis</keyword>
<keyword id="KW-0324">Glycolysis</keyword>
<keyword id="KW-0413">Isomerase</keyword>
<protein>
    <recommendedName>
        <fullName evidence="1">Triosephosphate isomerase</fullName>
        <shortName evidence="1">TIM</shortName>
        <shortName evidence="1">TPI</shortName>
        <ecNumber evidence="1">5.3.1.1</ecNumber>
    </recommendedName>
    <alternativeName>
        <fullName evidence="1">Triose-phosphate isomerase</fullName>
    </alternativeName>
</protein>
<comment type="function">
    <text evidence="1">Involved in the gluconeogenesis. Catalyzes stereospecifically the conversion of dihydroxyacetone phosphate (DHAP) to D-glyceraldehyde-3-phosphate (G3P).</text>
</comment>
<comment type="catalytic activity">
    <reaction evidence="1">
        <text>D-glyceraldehyde 3-phosphate = dihydroxyacetone phosphate</text>
        <dbReference type="Rhea" id="RHEA:18585"/>
        <dbReference type="ChEBI" id="CHEBI:57642"/>
        <dbReference type="ChEBI" id="CHEBI:59776"/>
        <dbReference type="EC" id="5.3.1.1"/>
    </reaction>
</comment>
<comment type="pathway">
    <text evidence="1">Carbohydrate biosynthesis; gluconeogenesis.</text>
</comment>
<comment type="pathway">
    <text evidence="1">Carbohydrate degradation; glycolysis; D-glyceraldehyde 3-phosphate from glycerone phosphate: step 1/1.</text>
</comment>
<comment type="subunit">
    <text evidence="1">Homodimer.</text>
</comment>
<comment type="subcellular location">
    <subcellularLocation>
        <location evidence="1">Cytoplasm</location>
    </subcellularLocation>
</comment>
<comment type="similarity">
    <text evidence="1">Belongs to the triosephosphate isomerase family.</text>
</comment>
<accession>A4TSA1</accession>
<sequence length="255" mass="26794">MRHPLVMGNWKLNGSTHMVNELIAGLRKELSTVDGCGVAIAPPAIYLNQAKHELAGSRIALGAQNVDVNLSGAFTGETSAEMLKDIGAQYIIIGHSERRTYHQESDELIAKKFGVLKEIGLIPVLCIGESEAENEAGQTEAVCAKQLDAVLNTLGVKAFEGAVIAYEPIWAIGTGKSATPAQAQAVHKFIRDHIAKQDAAVAAQVIIQYGGSVNDKNAAELFTQPDIDGALVGGASLKADAFAVIVKAAAKAKKA</sequence>
<evidence type="ECO:0000255" key="1">
    <source>
        <dbReference type="HAMAP-Rule" id="MF_00147"/>
    </source>
</evidence>
<organism>
    <name type="scientific">Yersinia pestis (strain Pestoides F)</name>
    <dbReference type="NCBI Taxonomy" id="386656"/>
    <lineage>
        <taxon>Bacteria</taxon>
        <taxon>Pseudomonadati</taxon>
        <taxon>Pseudomonadota</taxon>
        <taxon>Gammaproteobacteria</taxon>
        <taxon>Enterobacterales</taxon>
        <taxon>Yersiniaceae</taxon>
        <taxon>Yersinia</taxon>
    </lineage>
</organism>
<reference key="1">
    <citation type="submission" date="2007-02" db="EMBL/GenBank/DDBJ databases">
        <title>Complete sequence of chromosome of Yersinia pestis Pestoides F.</title>
        <authorList>
            <consortium name="US DOE Joint Genome Institute"/>
            <person name="Copeland A."/>
            <person name="Lucas S."/>
            <person name="Lapidus A."/>
            <person name="Barry K."/>
            <person name="Detter J.C."/>
            <person name="Glavina del Rio T."/>
            <person name="Hammon N."/>
            <person name="Israni S."/>
            <person name="Dalin E."/>
            <person name="Tice H."/>
            <person name="Pitluck S."/>
            <person name="Di Bartolo G."/>
            <person name="Chain P."/>
            <person name="Malfatti S."/>
            <person name="Shin M."/>
            <person name="Vergez L."/>
            <person name="Schmutz J."/>
            <person name="Larimer F."/>
            <person name="Land M."/>
            <person name="Hauser L."/>
            <person name="Worsham P."/>
            <person name="Chu M."/>
            <person name="Bearden S."/>
            <person name="Garcia E."/>
            <person name="Richardson P."/>
        </authorList>
    </citation>
    <scope>NUCLEOTIDE SEQUENCE [LARGE SCALE GENOMIC DNA]</scope>
    <source>
        <strain>Pestoides F</strain>
    </source>
</reference>
<name>TPIS_YERPP</name>
<proteinExistence type="inferred from homology"/>
<feature type="chain" id="PRO_0000307602" description="Triosephosphate isomerase">
    <location>
        <begin position="1"/>
        <end position="255"/>
    </location>
</feature>
<feature type="active site" description="Electrophile" evidence="1">
    <location>
        <position position="95"/>
    </location>
</feature>
<feature type="active site" description="Proton acceptor" evidence="1">
    <location>
        <position position="167"/>
    </location>
</feature>
<feature type="binding site" evidence="1">
    <location>
        <begin position="9"/>
        <end position="11"/>
    </location>
    <ligand>
        <name>substrate</name>
    </ligand>
</feature>
<feature type="binding site" evidence="1">
    <location>
        <position position="173"/>
    </location>
    <ligand>
        <name>substrate</name>
    </ligand>
</feature>
<feature type="binding site" evidence="1">
    <location>
        <position position="212"/>
    </location>
    <ligand>
        <name>substrate</name>
    </ligand>
</feature>
<feature type="binding site" evidence="1">
    <location>
        <begin position="233"/>
        <end position="234"/>
    </location>
    <ligand>
        <name>substrate</name>
    </ligand>
</feature>